<name>PANC_NITEU</name>
<organism>
    <name type="scientific">Nitrosomonas europaea (strain ATCC 19718 / CIP 103999 / KCTC 2705 / NBRC 14298)</name>
    <dbReference type="NCBI Taxonomy" id="228410"/>
    <lineage>
        <taxon>Bacteria</taxon>
        <taxon>Pseudomonadati</taxon>
        <taxon>Pseudomonadota</taxon>
        <taxon>Betaproteobacteria</taxon>
        <taxon>Nitrosomonadales</taxon>
        <taxon>Nitrosomonadaceae</taxon>
        <taxon>Nitrosomonas</taxon>
    </lineage>
</organism>
<proteinExistence type="inferred from homology"/>
<gene>
    <name evidence="1" type="primary">panC</name>
    <name type="ordered locus">NE0073</name>
</gene>
<protein>
    <recommendedName>
        <fullName evidence="1">Pantothenate synthetase</fullName>
        <shortName evidence="1">PS</shortName>
        <ecNumber evidence="1">6.3.2.1</ecNumber>
    </recommendedName>
    <alternativeName>
        <fullName evidence="1">Pantoate--beta-alanine ligase</fullName>
    </alternativeName>
    <alternativeName>
        <fullName evidence="1">Pantoate-activating enzyme</fullName>
    </alternativeName>
</protein>
<keyword id="KW-0067">ATP-binding</keyword>
<keyword id="KW-0963">Cytoplasm</keyword>
<keyword id="KW-0436">Ligase</keyword>
<keyword id="KW-0547">Nucleotide-binding</keyword>
<keyword id="KW-0566">Pantothenate biosynthesis</keyword>
<keyword id="KW-1185">Reference proteome</keyword>
<evidence type="ECO:0000255" key="1">
    <source>
        <dbReference type="HAMAP-Rule" id="MF_00158"/>
    </source>
</evidence>
<sequence>MEIITDIAPLRARLRHEASVAFVPTMGNLHAGHLSLVRIAQKHASCSVVSIFVNRLQFAPHEDFDRYPRTWSDDCRLLEEQGADIVFMPDEKTLYPVPQEFQLLLPPVADTLEGACRPGFFRGVTTVVLKLFNIVQPHIAVFGEKDYQQLQVVHRMVDQLNLPVEIIAGETVRDEDGLALSSRNNYLDATQRQEAGELAHHLKQIRDSIASGERDFPLLEQLAAEKLSKRGWVVDYVAVRQQHTLLPVAASDSSLVILGAAWLNQTRLIDNFLLTLP</sequence>
<reference key="1">
    <citation type="journal article" date="2003" name="J. Bacteriol.">
        <title>Complete genome sequence of the ammonia-oxidizing bacterium and obligate chemolithoautotroph Nitrosomonas europaea.</title>
        <authorList>
            <person name="Chain P."/>
            <person name="Lamerdin J.E."/>
            <person name="Larimer F.W."/>
            <person name="Regala W."/>
            <person name="Lao V."/>
            <person name="Land M.L."/>
            <person name="Hauser L."/>
            <person name="Hooper A.B."/>
            <person name="Klotz M.G."/>
            <person name="Norton J."/>
            <person name="Sayavedra-Soto L.A."/>
            <person name="Arciero D.M."/>
            <person name="Hommes N.G."/>
            <person name="Whittaker M.M."/>
            <person name="Arp D.J."/>
        </authorList>
    </citation>
    <scope>NUCLEOTIDE SEQUENCE [LARGE SCALE GENOMIC DNA]</scope>
    <source>
        <strain>ATCC 19718 / CIP 103999 / KCTC 2705 / NBRC 14298</strain>
    </source>
</reference>
<comment type="function">
    <text evidence="1">Catalyzes the condensation of pantoate with beta-alanine in an ATP-dependent reaction via a pantoyl-adenylate intermediate.</text>
</comment>
<comment type="catalytic activity">
    <reaction evidence="1">
        <text>(R)-pantoate + beta-alanine + ATP = (R)-pantothenate + AMP + diphosphate + H(+)</text>
        <dbReference type="Rhea" id="RHEA:10912"/>
        <dbReference type="ChEBI" id="CHEBI:15378"/>
        <dbReference type="ChEBI" id="CHEBI:15980"/>
        <dbReference type="ChEBI" id="CHEBI:29032"/>
        <dbReference type="ChEBI" id="CHEBI:30616"/>
        <dbReference type="ChEBI" id="CHEBI:33019"/>
        <dbReference type="ChEBI" id="CHEBI:57966"/>
        <dbReference type="ChEBI" id="CHEBI:456215"/>
        <dbReference type="EC" id="6.3.2.1"/>
    </reaction>
</comment>
<comment type="pathway">
    <text evidence="1">Cofactor biosynthesis; (R)-pantothenate biosynthesis; (R)-pantothenate from (R)-pantoate and beta-alanine: step 1/1.</text>
</comment>
<comment type="subunit">
    <text evidence="1">Homodimer.</text>
</comment>
<comment type="subcellular location">
    <subcellularLocation>
        <location evidence="1">Cytoplasm</location>
    </subcellularLocation>
</comment>
<comment type="miscellaneous">
    <text evidence="1">The reaction proceeds by a bi uni uni bi ping pong mechanism.</text>
</comment>
<comment type="similarity">
    <text evidence="1">Belongs to the pantothenate synthetase family.</text>
</comment>
<dbReference type="EC" id="6.3.2.1" evidence="1"/>
<dbReference type="EMBL" id="AL954747">
    <property type="protein sequence ID" value="CAD83984.1"/>
    <property type="molecule type" value="Genomic_DNA"/>
</dbReference>
<dbReference type="RefSeq" id="WP_011110725.1">
    <property type="nucleotide sequence ID" value="NC_004757.1"/>
</dbReference>
<dbReference type="SMR" id="Q82Y17"/>
<dbReference type="STRING" id="228410.NE0073"/>
<dbReference type="GeneID" id="87103287"/>
<dbReference type="KEGG" id="neu:NE0073"/>
<dbReference type="eggNOG" id="COG0414">
    <property type="taxonomic scope" value="Bacteria"/>
</dbReference>
<dbReference type="HOGENOM" id="CLU_047148_0_0_4"/>
<dbReference type="OrthoDB" id="9773087at2"/>
<dbReference type="PhylomeDB" id="Q82Y17"/>
<dbReference type="UniPathway" id="UPA00028">
    <property type="reaction ID" value="UER00005"/>
</dbReference>
<dbReference type="Proteomes" id="UP000001416">
    <property type="component" value="Chromosome"/>
</dbReference>
<dbReference type="GO" id="GO:0005829">
    <property type="term" value="C:cytosol"/>
    <property type="evidence" value="ECO:0007669"/>
    <property type="project" value="TreeGrafter"/>
</dbReference>
<dbReference type="GO" id="GO:0005524">
    <property type="term" value="F:ATP binding"/>
    <property type="evidence" value="ECO:0007669"/>
    <property type="project" value="UniProtKB-KW"/>
</dbReference>
<dbReference type="GO" id="GO:0004592">
    <property type="term" value="F:pantoate-beta-alanine ligase activity"/>
    <property type="evidence" value="ECO:0007669"/>
    <property type="project" value="UniProtKB-UniRule"/>
</dbReference>
<dbReference type="GO" id="GO:0015940">
    <property type="term" value="P:pantothenate biosynthetic process"/>
    <property type="evidence" value="ECO:0007669"/>
    <property type="project" value="UniProtKB-UniRule"/>
</dbReference>
<dbReference type="CDD" id="cd00560">
    <property type="entry name" value="PanC"/>
    <property type="match status" value="1"/>
</dbReference>
<dbReference type="FunFam" id="3.30.1300.10:FF:000001">
    <property type="entry name" value="Pantothenate synthetase"/>
    <property type="match status" value="1"/>
</dbReference>
<dbReference type="Gene3D" id="3.40.50.620">
    <property type="entry name" value="HUPs"/>
    <property type="match status" value="1"/>
</dbReference>
<dbReference type="Gene3D" id="3.30.1300.10">
    <property type="entry name" value="Pantoate-beta-alanine ligase, C-terminal domain"/>
    <property type="match status" value="1"/>
</dbReference>
<dbReference type="HAMAP" id="MF_00158">
    <property type="entry name" value="PanC"/>
    <property type="match status" value="1"/>
</dbReference>
<dbReference type="InterPro" id="IPR003721">
    <property type="entry name" value="Pantoate_ligase"/>
</dbReference>
<dbReference type="InterPro" id="IPR042176">
    <property type="entry name" value="Pantoate_ligase_C"/>
</dbReference>
<dbReference type="InterPro" id="IPR014729">
    <property type="entry name" value="Rossmann-like_a/b/a_fold"/>
</dbReference>
<dbReference type="NCBIfam" id="TIGR00018">
    <property type="entry name" value="panC"/>
    <property type="match status" value="1"/>
</dbReference>
<dbReference type="PANTHER" id="PTHR21299">
    <property type="entry name" value="CYTIDYLATE KINASE/PANTOATE-BETA-ALANINE LIGASE"/>
    <property type="match status" value="1"/>
</dbReference>
<dbReference type="PANTHER" id="PTHR21299:SF1">
    <property type="entry name" value="PANTOATE--BETA-ALANINE LIGASE"/>
    <property type="match status" value="1"/>
</dbReference>
<dbReference type="Pfam" id="PF02569">
    <property type="entry name" value="Pantoate_ligase"/>
    <property type="match status" value="1"/>
</dbReference>
<dbReference type="SUPFAM" id="SSF52374">
    <property type="entry name" value="Nucleotidylyl transferase"/>
    <property type="match status" value="1"/>
</dbReference>
<accession>Q82Y17</accession>
<feature type="chain" id="PRO_0000128249" description="Pantothenate synthetase">
    <location>
        <begin position="1"/>
        <end position="277"/>
    </location>
</feature>
<feature type="active site" description="Proton donor" evidence="1">
    <location>
        <position position="33"/>
    </location>
</feature>
<feature type="binding site" evidence="1">
    <location>
        <begin position="26"/>
        <end position="33"/>
    </location>
    <ligand>
        <name>ATP</name>
        <dbReference type="ChEBI" id="CHEBI:30616"/>
    </ligand>
</feature>
<feature type="binding site" evidence="1">
    <location>
        <position position="57"/>
    </location>
    <ligand>
        <name>(R)-pantoate</name>
        <dbReference type="ChEBI" id="CHEBI:15980"/>
    </ligand>
</feature>
<feature type="binding site" evidence="1">
    <location>
        <position position="57"/>
    </location>
    <ligand>
        <name>beta-alanine</name>
        <dbReference type="ChEBI" id="CHEBI:57966"/>
    </ligand>
</feature>
<feature type="binding site" evidence="1">
    <location>
        <begin position="143"/>
        <end position="146"/>
    </location>
    <ligand>
        <name>ATP</name>
        <dbReference type="ChEBI" id="CHEBI:30616"/>
    </ligand>
</feature>
<feature type="binding site" evidence="1">
    <location>
        <position position="149"/>
    </location>
    <ligand>
        <name>(R)-pantoate</name>
        <dbReference type="ChEBI" id="CHEBI:15980"/>
    </ligand>
</feature>
<feature type="binding site" evidence="1">
    <location>
        <position position="172"/>
    </location>
    <ligand>
        <name>ATP</name>
        <dbReference type="ChEBI" id="CHEBI:30616"/>
    </ligand>
</feature>
<feature type="binding site" evidence="1">
    <location>
        <begin position="180"/>
        <end position="183"/>
    </location>
    <ligand>
        <name>ATP</name>
        <dbReference type="ChEBI" id="CHEBI:30616"/>
    </ligand>
</feature>